<keyword id="KW-1185">Reference proteome</keyword>
<reference key="1">
    <citation type="journal article" date="1993" name="Mol. Microbiol.">
        <title>DNA sequence, structure and gene expression of mycobacteriophage L5: a phage system for mycobacterial genetics.</title>
        <authorList>
            <person name="Hatfull G.F."/>
            <person name="Sarkis G.J."/>
        </authorList>
    </citation>
    <scope>NUCLEOTIDE SEQUENCE [LARGE SCALE GENOMIC DNA]</scope>
</reference>
<name>VG35_BPML5</name>
<feature type="chain" id="PRO_0000164756" description="Gene 35 protein">
    <location>
        <begin position="1"/>
        <end position="72"/>
    </location>
</feature>
<organism>
    <name type="scientific">Mycobacterium phage L5</name>
    <name type="common">Mycobacteriophage L5</name>
    <dbReference type="NCBI Taxonomy" id="31757"/>
    <lineage>
        <taxon>Viruses</taxon>
        <taxon>Duplodnaviria</taxon>
        <taxon>Heunggongvirae</taxon>
        <taxon>Uroviricota</taxon>
        <taxon>Caudoviricetes</taxon>
        <taxon>Fromanvirus</taxon>
    </lineage>
</organism>
<organismHost>
    <name type="scientific">Mycobacterium</name>
    <dbReference type="NCBI Taxonomy" id="1763"/>
</organismHost>
<protein>
    <recommendedName>
        <fullName>Gene 35 protein</fullName>
    </recommendedName>
    <alternativeName>
        <fullName>Gp35</fullName>
    </alternativeName>
</protein>
<gene>
    <name type="primary">35</name>
</gene>
<dbReference type="EMBL" id="Z18946">
    <property type="protein sequence ID" value="CAA79411.1"/>
    <property type="molecule type" value="Genomic_DNA"/>
</dbReference>
<dbReference type="PIR" id="S30980">
    <property type="entry name" value="S30980"/>
</dbReference>
<dbReference type="RefSeq" id="NP_039699.1">
    <property type="nucleotide sequence ID" value="NC_001335.1"/>
</dbReference>
<dbReference type="GeneID" id="2942977"/>
<dbReference type="KEGG" id="vg:2942977"/>
<dbReference type="OrthoDB" id="28099at10239"/>
<dbReference type="Proteomes" id="UP000002123">
    <property type="component" value="Genome"/>
</dbReference>
<sequence length="72" mass="8264">MTNQYPPQQDRPQWYAGSPYPVAPPPMPQPTVMPVRTNHAMHLLLSLITCGMWLPVWVIMAMINSGRTRKVY</sequence>
<accession>Q05245</accession>
<proteinExistence type="predicted"/>